<organism>
    <name type="scientific">Bacillus cereus (strain ATCC 14579 / DSM 31 / CCUG 7414 / JCM 2152 / NBRC 15305 / NCIMB 9373 / NCTC 2599 / NRRL B-3711)</name>
    <dbReference type="NCBI Taxonomy" id="226900"/>
    <lineage>
        <taxon>Bacteria</taxon>
        <taxon>Bacillati</taxon>
        <taxon>Bacillota</taxon>
        <taxon>Bacilli</taxon>
        <taxon>Bacillales</taxon>
        <taxon>Bacillaceae</taxon>
        <taxon>Bacillus</taxon>
        <taxon>Bacillus cereus group</taxon>
    </lineage>
</organism>
<proteinExistence type="inferred from homology"/>
<comment type="function">
    <text evidence="1">Mediates uptake of L-cystine, the oxidized form of L-cysteine.</text>
</comment>
<comment type="subcellular location">
    <subcellularLocation>
        <location evidence="3">Membrane</location>
        <topology evidence="3">Multi-pass membrane protein</topology>
    </subcellularLocation>
</comment>
<comment type="similarity">
    <text evidence="3">Belongs to the dicarboxylate/amino acid:cation symporter (DAACS) (TC 2.A.23) family.</text>
</comment>
<name>TCYP_BACCR</name>
<dbReference type="EMBL" id="AE016877">
    <property type="protein sequence ID" value="AAP11157.1"/>
    <property type="molecule type" value="Genomic_DNA"/>
</dbReference>
<dbReference type="RefSeq" id="NP_833956.1">
    <property type="nucleotide sequence ID" value="NC_004722.1"/>
</dbReference>
<dbReference type="RefSeq" id="WP_001094344.1">
    <property type="nucleotide sequence ID" value="NZ_CP138336.1"/>
</dbReference>
<dbReference type="SMR" id="Q818K7"/>
<dbReference type="STRING" id="226900.BC_4242"/>
<dbReference type="KEGG" id="bce:BC4242"/>
<dbReference type="PATRIC" id="fig|226900.8.peg.4386"/>
<dbReference type="HOGENOM" id="CLU_019375_0_1_9"/>
<dbReference type="OrthoDB" id="7778689at2"/>
<dbReference type="Proteomes" id="UP000001417">
    <property type="component" value="Chromosome"/>
</dbReference>
<dbReference type="GO" id="GO:0005886">
    <property type="term" value="C:plasma membrane"/>
    <property type="evidence" value="ECO:0000318"/>
    <property type="project" value="GO_Central"/>
</dbReference>
<dbReference type="GO" id="GO:0015184">
    <property type="term" value="F:L-cystine transmembrane transporter activity"/>
    <property type="evidence" value="ECO:0000318"/>
    <property type="project" value="GO_Central"/>
</dbReference>
<dbReference type="GO" id="GO:0015293">
    <property type="term" value="F:symporter activity"/>
    <property type="evidence" value="ECO:0007669"/>
    <property type="project" value="InterPro"/>
</dbReference>
<dbReference type="FunFam" id="1.10.3860.10:FF:000004">
    <property type="entry name" value="L-cystine transporter tcyP"/>
    <property type="match status" value="1"/>
</dbReference>
<dbReference type="Gene3D" id="1.10.3860.10">
    <property type="entry name" value="Sodium:dicarboxylate symporter"/>
    <property type="match status" value="1"/>
</dbReference>
<dbReference type="InterPro" id="IPR001991">
    <property type="entry name" value="Na-dicarboxylate_symporter"/>
</dbReference>
<dbReference type="InterPro" id="IPR036458">
    <property type="entry name" value="Na:dicarbo_symporter_sf"/>
</dbReference>
<dbReference type="PANTHER" id="PTHR42865:SF5">
    <property type="entry name" value="L-CYSTINE TRANSPORTER TCYP"/>
    <property type="match status" value="1"/>
</dbReference>
<dbReference type="PANTHER" id="PTHR42865">
    <property type="entry name" value="PROTON/GLUTAMATE-ASPARTATE SYMPORTER"/>
    <property type="match status" value="1"/>
</dbReference>
<dbReference type="Pfam" id="PF00375">
    <property type="entry name" value="SDF"/>
    <property type="match status" value="1"/>
</dbReference>
<dbReference type="PRINTS" id="PR00173">
    <property type="entry name" value="EDTRNSPORT"/>
</dbReference>
<dbReference type="SUPFAM" id="SSF118215">
    <property type="entry name" value="Proton glutamate symport protein"/>
    <property type="match status" value="1"/>
</dbReference>
<gene>
    <name type="ordered locus">BC_4242</name>
</gene>
<protein>
    <recommendedName>
        <fullName>L-cystine uptake protein TcyP</fullName>
    </recommendedName>
    <alternativeName>
        <fullName>Transporter of cystine TcyP</fullName>
    </alternativeName>
</protein>
<evidence type="ECO:0000250" key="1"/>
<evidence type="ECO:0000255" key="2"/>
<evidence type="ECO:0000305" key="3"/>
<accession>Q818K7</accession>
<reference key="1">
    <citation type="journal article" date="2003" name="Nature">
        <title>Genome sequence of Bacillus cereus and comparative analysis with Bacillus anthracis.</title>
        <authorList>
            <person name="Ivanova N."/>
            <person name="Sorokin A."/>
            <person name="Anderson I."/>
            <person name="Galleron N."/>
            <person name="Candelon B."/>
            <person name="Kapatral V."/>
            <person name="Bhattacharyya A."/>
            <person name="Reznik G."/>
            <person name="Mikhailova N."/>
            <person name="Lapidus A."/>
            <person name="Chu L."/>
            <person name="Mazur M."/>
            <person name="Goltsman E."/>
            <person name="Larsen N."/>
            <person name="D'Souza M."/>
            <person name="Walunas T."/>
            <person name="Grechkin Y."/>
            <person name="Pusch G."/>
            <person name="Haselkorn R."/>
            <person name="Fonstein M."/>
            <person name="Ehrlich S.D."/>
            <person name="Overbeek R."/>
            <person name="Kyrpides N.C."/>
        </authorList>
    </citation>
    <scope>NUCLEOTIDE SEQUENCE [LARGE SCALE GENOMIC DNA]</scope>
    <source>
        <strain>ATCC 14579 / DSM 31 / CCUG 7414 / JCM 2152 / NBRC 15305 / NCIMB 9373 / NCTC 2599 / NRRL B-3711</strain>
    </source>
</reference>
<feature type="chain" id="PRO_0000279737" description="L-cystine uptake protein TcyP">
    <location>
        <begin position="1"/>
        <end position="464"/>
    </location>
</feature>
<feature type="transmembrane region" description="Helical" evidence="2">
    <location>
        <begin position="3"/>
        <end position="23"/>
    </location>
</feature>
<feature type="transmembrane region" description="Helical" evidence="2">
    <location>
        <begin position="34"/>
        <end position="54"/>
    </location>
</feature>
<feature type="transmembrane region" description="Helical" evidence="2">
    <location>
        <begin position="73"/>
        <end position="93"/>
    </location>
</feature>
<feature type="transmembrane region" description="Helical" evidence="2">
    <location>
        <begin position="107"/>
        <end position="127"/>
    </location>
</feature>
<feature type="transmembrane region" description="Helical" evidence="2">
    <location>
        <begin position="184"/>
        <end position="204"/>
    </location>
</feature>
<feature type="transmembrane region" description="Helical" evidence="2">
    <location>
        <begin position="225"/>
        <end position="245"/>
    </location>
</feature>
<feature type="transmembrane region" description="Helical" evidence="2">
    <location>
        <begin position="263"/>
        <end position="283"/>
    </location>
</feature>
<feature type="transmembrane region" description="Helical" evidence="2">
    <location>
        <begin position="347"/>
        <end position="367"/>
    </location>
</feature>
<feature type="transmembrane region" description="Helical" evidence="2">
    <location>
        <begin position="371"/>
        <end position="391"/>
    </location>
</feature>
<feature type="transmembrane region" description="Helical" evidence="2">
    <location>
        <begin position="395"/>
        <end position="415"/>
    </location>
</feature>
<sequence>MNTLLVGINVAVMLILVGVLYYMQRKHVSFNKRVFTALGVGILFGLILQFIYEPTSKVIIESNTWFGLIGNGYVKLLQMIVMPLILVSIISAFTKLQLTKNLGKISGLIIGILILTTGIAAAVGIAASAGFDVSATGLQQGDAESARLKLVEERFTSIEKTTIPDKLLELLPTNPFLDLTGARPTSTISVVIFAAFIGIAFIGVKRKYPEQAELFKKMLDAVYAIVMRMVTLILRLTPYGVLALMAKTVAGSDINAILKLGNFVLASYVALIVMFIIHLLLIALSGLNPIQYLKKVFPVLTFAFTSRSSAGAMPLNIEAQKEKLGISEGIANFAASFGVSIGQNGCAGIYPAMLAMMVAPTVGIDPLQPQFILTLIAVVAISSFGVAGVGGGATFAALIVLSTMNLPIGIVALVISVEPLIDMGRTALNVSGSMTAGLISSKWLGELDQDTYNQDDTKTGEIAS</sequence>
<keyword id="KW-0029">Amino-acid transport</keyword>
<keyword id="KW-0472">Membrane</keyword>
<keyword id="KW-1185">Reference proteome</keyword>
<keyword id="KW-0812">Transmembrane</keyword>
<keyword id="KW-1133">Transmembrane helix</keyword>
<keyword id="KW-0813">Transport</keyword>